<proteinExistence type="inferred from homology"/>
<evidence type="ECO:0000255" key="1">
    <source>
        <dbReference type="HAMAP-Rule" id="MF_00811"/>
    </source>
</evidence>
<reference key="1">
    <citation type="submission" date="2009-03" db="EMBL/GenBank/DDBJ databases">
        <title>Complete genome sequence of Edwardsiella ictaluri 93-146.</title>
        <authorList>
            <person name="Williams M.L."/>
            <person name="Gillaspy A.F."/>
            <person name="Dyer D.W."/>
            <person name="Thune R.L."/>
            <person name="Waldbieser G.C."/>
            <person name="Schuster S.C."/>
            <person name="Gipson J."/>
            <person name="Zaitshik J."/>
            <person name="Landry C."/>
            <person name="Lawrence M.L."/>
        </authorList>
    </citation>
    <scope>NUCLEOTIDE SEQUENCE [LARGE SCALE GENOMIC DNA]</scope>
    <source>
        <strain>93-146</strain>
    </source>
</reference>
<feature type="chain" id="PRO_1000213019" description="2,3,4,5-tetrahydropyridine-2,6-dicarboxylate N-succinyltransferase">
    <location>
        <begin position="1"/>
        <end position="274"/>
    </location>
</feature>
<feature type="binding site" evidence="1">
    <location>
        <position position="104"/>
    </location>
    <ligand>
        <name>substrate</name>
    </ligand>
</feature>
<feature type="binding site" evidence="1">
    <location>
        <position position="141"/>
    </location>
    <ligand>
        <name>substrate</name>
    </ligand>
</feature>
<dbReference type="EC" id="2.3.1.117" evidence="1"/>
<dbReference type="EMBL" id="CP001600">
    <property type="protein sequence ID" value="ACR68049.1"/>
    <property type="molecule type" value="Genomic_DNA"/>
</dbReference>
<dbReference type="RefSeq" id="WP_015870242.1">
    <property type="nucleotide sequence ID" value="NZ_CP169062.1"/>
</dbReference>
<dbReference type="SMR" id="C5BHB3"/>
<dbReference type="STRING" id="67780.B6E78_14760"/>
<dbReference type="GeneID" id="69537889"/>
<dbReference type="KEGG" id="eic:NT01EI_0833"/>
<dbReference type="PATRIC" id="fig|634503.3.peg.752"/>
<dbReference type="HOGENOM" id="CLU_050859_0_1_6"/>
<dbReference type="OrthoDB" id="9775362at2"/>
<dbReference type="UniPathway" id="UPA00034">
    <property type="reaction ID" value="UER00019"/>
</dbReference>
<dbReference type="Proteomes" id="UP000001485">
    <property type="component" value="Chromosome"/>
</dbReference>
<dbReference type="GO" id="GO:0005737">
    <property type="term" value="C:cytoplasm"/>
    <property type="evidence" value="ECO:0007669"/>
    <property type="project" value="UniProtKB-SubCell"/>
</dbReference>
<dbReference type="GO" id="GO:0008666">
    <property type="term" value="F:2,3,4,5-tetrahydropyridine-2,6-dicarboxylate N-succinyltransferase activity"/>
    <property type="evidence" value="ECO:0007669"/>
    <property type="project" value="UniProtKB-UniRule"/>
</dbReference>
<dbReference type="GO" id="GO:0016779">
    <property type="term" value="F:nucleotidyltransferase activity"/>
    <property type="evidence" value="ECO:0007669"/>
    <property type="project" value="TreeGrafter"/>
</dbReference>
<dbReference type="GO" id="GO:0019877">
    <property type="term" value="P:diaminopimelate biosynthetic process"/>
    <property type="evidence" value="ECO:0007669"/>
    <property type="project" value="UniProtKB-UniRule"/>
</dbReference>
<dbReference type="GO" id="GO:0009089">
    <property type="term" value="P:lysine biosynthetic process via diaminopimelate"/>
    <property type="evidence" value="ECO:0007669"/>
    <property type="project" value="UniProtKB-UniRule"/>
</dbReference>
<dbReference type="CDD" id="cd03350">
    <property type="entry name" value="LbH_THP_succinylT"/>
    <property type="match status" value="1"/>
</dbReference>
<dbReference type="FunFam" id="2.160.10.10:FF:000004">
    <property type="entry name" value="2,3,4,5-tetrahydropyridine-2,6-dicarboxylate N-succinyltransferase"/>
    <property type="match status" value="1"/>
</dbReference>
<dbReference type="Gene3D" id="2.160.10.10">
    <property type="entry name" value="Hexapeptide repeat proteins"/>
    <property type="match status" value="1"/>
</dbReference>
<dbReference type="Gene3D" id="1.10.166.10">
    <property type="entry name" value="Tetrahydrodipicolinate-N-succinyltransferase, N-terminal domain"/>
    <property type="match status" value="1"/>
</dbReference>
<dbReference type="HAMAP" id="MF_00811">
    <property type="entry name" value="DapD"/>
    <property type="match status" value="1"/>
</dbReference>
<dbReference type="InterPro" id="IPR005664">
    <property type="entry name" value="DapD_Trfase_Hexpep_rpt_fam"/>
</dbReference>
<dbReference type="InterPro" id="IPR001451">
    <property type="entry name" value="Hexapep"/>
</dbReference>
<dbReference type="InterPro" id="IPR018357">
    <property type="entry name" value="Hexapep_transf_CS"/>
</dbReference>
<dbReference type="InterPro" id="IPR023180">
    <property type="entry name" value="THP_succinylTrfase_dom1"/>
</dbReference>
<dbReference type="InterPro" id="IPR037133">
    <property type="entry name" value="THP_succinylTrfase_N_sf"/>
</dbReference>
<dbReference type="InterPro" id="IPR011004">
    <property type="entry name" value="Trimer_LpxA-like_sf"/>
</dbReference>
<dbReference type="NCBIfam" id="TIGR00965">
    <property type="entry name" value="dapD"/>
    <property type="match status" value="1"/>
</dbReference>
<dbReference type="NCBIfam" id="NF008808">
    <property type="entry name" value="PRK11830.1"/>
    <property type="match status" value="1"/>
</dbReference>
<dbReference type="PANTHER" id="PTHR19136:SF52">
    <property type="entry name" value="2,3,4,5-TETRAHYDROPYRIDINE-2,6-DICARBOXYLATE N-SUCCINYLTRANSFERASE"/>
    <property type="match status" value="1"/>
</dbReference>
<dbReference type="PANTHER" id="PTHR19136">
    <property type="entry name" value="MOLYBDENUM COFACTOR GUANYLYLTRANSFERASE"/>
    <property type="match status" value="1"/>
</dbReference>
<dbReference type="Pfam" id="PF14602">
    <property type="entry name" value="Hexapep_2"/>
    <property type="match status" value="1"/>
</dbReference>
<dbReference type="Pfam" id="PF14805">
    <property type="entry name" value="THDPS_N_2"/>
    <property type="match status" value="1"/>
</dbReference>
<dbReference type="SUPFAM" id="SSF51161">
    <property type="entry name" value="Trimeric LpxA-like enzymes"/>
    <property type="match status" value="1"/>
</dbReference>
<dbReference type="PROSITE" id="PS00101">
    <property type="entry name" value="HEXAPEP_TRANSFERASES"/>
    <property type="match status" value="1"/>
</dbReference>
<protein>
    <recommendedName>
        <fullName evidence="1">2,3,4,5-tetrahydropyridine-2,6-dicarboxylate N-succinyltransferase</fullName>
        <ecNumber evidence="1">2.3.1.117</ecNumber>
    </recommendedName>
    <alternativeName>
        <fullName evidence="1">Tetrahydrodipicolinate N-succinyltransferase</fullName>
        <shortName evidence="1">THDP succinyltransferase</shortName>
        <shortName evidence="1">THP succinyltransferase</shortName>
        <shortName evidence="1">Tetrahydropicolinate succinylase</shortName>
    </alternativeName>
</protein>
<sequence length="274" mass="29926">MQQLQTVIENAFERRAEITPANTDSITREAVSQVIALLDSGALRVAEKINGEWVTHQWLKKAVLLSFRINDNRLMEGAETRFYDKVPMKFADYDEARFQREGFRVVPPASVRQGAFIARNTVLMPSYVNIGAYVDEGTMVDTWATVGSCAQIGKNVHLSGGVGIGGVLEPLQANPTIIEDNCFIGARSEVVEGVIVEEGSVISMGVFIGQSTKIYDRETGEVHYGRVPAGSVVVSGNLPSKRGDYSLYCAVIVKKVDAKTLGKVGINELLRTID</sequence>
<organism>
    <name type="scientific">Edwardsiella ictaluri (strain 93-146)</name>
    <dbReference type="NCBI Taxonomy" id="634503"/>
    <lineage>
        <taxon>Bacteria</taxon>
        <taxon>Pseudomonadati</taxon>
        <taxon>Pseudomonadota</taxon>
        <taxon>Gammaproteobacteria</taxon>
        <taxon>Enterobacterales</taxon>
        <taxon>Hafniaceae</taxon>
        <taxon>Edwardsiella</taxon>
    </lineage>
</organism>
<accession>C5BHB3</accession>
<comment type="catalytic activity">
    <reaction evidence="1">
        <text>(S)-2,3,4,5-tetrahydrodipicolinate + succinyl-CoA + H2O = (S)-2-succinylamino-6-oxoheptanedioate + CoA</text>
        <dbReference type="Rhea" id="RHEA:17325"/>
        <dbReference type="ChEBI" id="CHEBI:15377"/>
        <dbReference type="ChEBI" id="CHEBI:15685"/>
        <dbReference type="ChEBI" id="CHEBI:16845"/>
        <dbReference type="ChEBI" id="CHEBI:57287"/>
        <dbReference type="ChEBI" id="CHEBI:57292"/>
        <dbReference type="EC" id="2.3.1.117"/>
    </reaction>
</comment>
<comment type="pathway">
    <text evidence="1">Amino-acid biosynthesis; L-lysine biosynthesis via DAP pathway; LL-2,6-diaminopimelate from (S)-tetrahydrodipicolinate (succinylase route): step 1/3.</text>
</comment>
<comment type="subunit">
    <text evidence="1">Homotrimer.</text>
</comment>
<comment type="subcellular location">
    <subcellularLocation>
        <location evidence="1">Cytoplasm</location>
    </subcellularLocation>
</comment>
<comment type="similarity">
    <text evidence="1">Belongs to the transferase hexapeptide repeat family.</text>
</comment>
<name>DAPD_EDWI9</name>
<gene>
    <name evidence="1" type="primary">dapD</name>
    <name type="ordered locus">NT01EI_0833</name>
</gene>
<keyword id="KW-0012">Acyltransferase</keyword>
<keyword id="KW-0028">Amino-acid biosynthesis</keyword>
<keyword id="KW-0963">Cytoplasm</keyword>
<keyword id="KW-0220">Diaminopimelate biosynthesis</keyword>
<keyword id="KW-0457">Lysine biosynthesis</keyword>
<keyword id="KW-0677">Repeat</keyword>
<keyword id="KW-0808">Transferase</keyword>